<name>PTH_RICCK</name>
<feature type="chain" id="PRO_1000010642" description="Peptidyl-tRNA hydrolase">
    <location>
        <begin position="1"/>
        <end position="185"/>
    </location>
</feature>
<feature type="active site" description="Proton acceptor" evidence="1">
    <location>
        <position position="19"/>
    </location>
</feature>
<feature type="binding site" evidence="1">
    <location>
        <position position="14"/>
    </location>
    <ligand>
        <name>tRNA</name>
        <dbReference type="ChEBI" id="CHEBI:17843"/>
    </ligand>
</feature>
<feature type="binding site" evidence="1">
    <location>
        <position position="65"/>
    </location>
    <ligand>
        <name>tRNA</name>
        <dbReference type="ChEBI" id="CHEBI:17843"/>
    </ligand>
</feature>
<feature type="binding site" evidence="1">
    <location>
        <position position="67"/>
    </location>
    <ligand>
        <name>tRNA</name>
        <dbReference type="ChEBI" id="CHEBI:17843"/>
    </ligand>
</feature>
<feature type="binding site" evidence="1">
    <location>
        <position position="113"/>
    </location>
    <ligand>
        <name>tRNA</name>
        <dbReference type="ChEBI" id="CHEBI:17843"/>
    </ligand>
</feature>
<feature type="site" description="Discriminates between blocked and unblocked aminoacyl-tRNA" evidence="1">
    <location>
        <position position="9"/>
    </location>
</feature>
<feature type="site" description="Stabilizes the basic form of H active site to accept a proton" evidence="1">
    <location>
        <position position="92"/>
    </location>
</feature>
<dbReference type="EC" id="3.1.1.29" evidence="1"/>
<dbReference type="EMBL" id="CP000409">
    <property type="protein sequence ID" value="ABV73298.1"/>
    <property type="molecule type" value="Genomic_DNA"/>
</dbReference>
<dbReference type="RefSeq" id="WP_012148497.1">
    <property type="nucleotide sequence ID" value="NC_009879.1"/>
</dbReference>
<dbReference type="SMR" id="A8EY65"/>
<dbReference type="STRING" id="293613.A1E_01765"/>
<dbReference type="KEGG" id="rcm:A1E_01765"/>
<dbReference type="eggNOG" id="COG0193">
    <property type="taxonomic scope" value="Bacteria"/>
</dbReference>
<dbReference type="HOGENOM" id="CLU_062456_2_2_5"/>
<dbReference type="Proteomes" id="UP000007056">
    <property type="component" value="Chromosome"/>
</dbReference>
<dbReference type="GO" id="GO:0005737">
    <property type="term" value="C:cytoplasm"/>
    <property type="evidence" value="ECO:0007669"/>
    <property type="project" value="UniProtKB-SubCell"/>
</dbReference>
<dbReference type="GO" id="GO:0004045">
    <property type="term" value="F:peptidyl-tRNA hydrolase activity"/>
    <property type="evidence" value="ECO:0007669"/>
    <property type="project" value="UniProtKB-UniRule"/>
</dbReference>
<dbReference type="GO" id="GO:0000049">
    <property type="term" value="F:tRNA binding"/>
    <property type="evidence" value="ECO:0007669"/>
    <property type="project" value="UniProtKB-UniRule"/>
</dbReference>
<dbReference type="GO" id="GO:0006515">
    <property type="term" value="P:protein quality control for misfolded or incompletely synthesized proteins"/>
    <property type="evidence" value="ECO:0007669"/>
    <property type="project" value="UniProtKB-UniRule"/>
</dbReference>
<dbReference type="GO" id="GO:0072344">
    <property type="term" value="P:rescue of stalled ribosome"/>
    <property type="evidence" value="ECO:0007669"/>
    <property type="project" value="UniProtKB-UniRule"/>
</dbReference>
<dbReference type="CDD" id="cd00462">
    <property type="entry name" value="PTH"/>
    <property type="match status" value="1"/>
</dbReference>
<dbReference type="FunFam" id="3.40.50.1470:FF:000001">
    <property type="entry name" value="Peptidyl-tRNA hydrolase"/>
    <property type="match status" value="1"/>
</dbReference>
<dbReference type="Gene3D" id="3.40.50.1470">
    <property type="entry name" value="Peptidyl-tRNA hydrolase"/>
    <property type="match status" value="1"/>
</dbReference>
<dbReference type="HAMAP" id="MF_00083">
    <property type="entry name" value="Pept_tRNA_hydro_bact"/>
    <property type="match status" value="1"/>
</dbReference>
<dbReference type="InterPro" id="IPR001328">
    <property type="entry name" value="Pept_tRNA_hydro"/>
</dbReference>
<dbReference type="InterPro" id="IPR018171">
    <property type="entry name" value="Pept_tRNA_hydro_CS"/>
</dbReference>
<dbReference type="InterPro" id="IPR036416">
    <property type="entry name" value="Pept_tRNA_hydro_sf"/>
</dbReference>
<dbReference type="NCBIfam" id="TIGR00447">
    <property type="entry name" value="pth"/>
    <property type="match status" value="1"/>
</dbReference>
<dbReference type="PANTHER" id="PTHR17224">
    <property type="entry name" value="PEPTIDYL-TRNA HYDROLASE"/>
    <property type="match status" value="1"/>
</dbReference>
<dbReference type="PANTHER" id="PTHR17224:SF1">
    <property type="entry name" value="PEPTIDYL-TRNA HYDROLASE"/>
    <property type="match status" value="1"/>
</dbReference>
<dbReference type="Pfam" id="PF01195">
    <property type="entry name" value="Pept_tRNA_hydro"/>
    <property type="match status" value="1"/>
</dbReference>
<dbReference type="SUPFAM" id="SSF53178">
    <property type="entry name" value="Peptidyl-tRNA hydrolase-like"/>
    <property type="match status" value="1"/>
</dbReference>
<dbReference type="PROSITE" id="PS01195">
    <property type="entry name" value="PEPT_TRNA_HYDROL_1"/>
    <property type="match status" value="1"/>
</dbReference>
<dbReference type="PROSITE" id="PS01196">
    <property type="entry name" value="PEPT_TRNA_HYDROL_2"/>
    <property type="match status" value="1"/>
</dbReference>
<protein>
    <recommendedName>
        <fullName evidence="1">Peptidyl-tRNA hydrolase</fullName>
        <shortName evidence="1">Pth</shortName>
        <ecNumber evidence="1">3.1.1.29</ecNumber>
    </recommendedName>
</protein>
<gene>
    <name evidence="1" type="primary">pth</name>
    <name type="ordered locus">A1E_01765</name>
</gene>
<keyword id="KW-0963">Cytoplasm</keyword>
<keyword id="KW-0378">Hydrolase</keyword>
<keyword id="KW-0694">RNA-binding</keyword>
<keyword id="KW-0820">tRNA-binding</keyword>
<organism>
    <name type="scientific">Rickettsia canadensis (strain McKiel)</name>
    <dbReference type="NCBI Taxonomy" id="293613"/>
    <lineage>
        <taxon>Bacteria</taxon>
        <taxon>Pseudomonadati</taxon>
        <taxon>Pseudomonadota</taxon>
        <taxon>Alphaproteobacteria</taxon>
        <taxon>Rickettsiales</taxon>
        <taxon>Rickettsiaceae</taxon>
        <taxon>Rickettsieae</taxon>
        <taxon>Rickettsia</taxon>
        <taxon>belli group</taxon>
    </lineage>
</organism>
<sequence>MIFVIGLGNPGKEYQYTRHNIGFIVIEKIANQYNLSFSTKKKFNCEIVESSVEKQKLIFIKPTTYMNLSGKSVISVKTYYNICSEKIFVIHDDIDLETGRIKFKTGGGNGGHNGLKSIDRVIGNNYNRIRIGVGRPQNNQDVADYVLNNFPRSEYEIVIQSIDKITNNFDLILENKLEEFKNKIG</sequence>
<proteinExistence type="inferred from homology"/>
<comment type="function">
    <text evidence="1">Hydrolyzes ribosome-free peptidyl-tRNAs (with 1 or more amino acids incorporated), which drop off the ribosome during protein synthesis, or as a result of ribosome stalling.</text>
</comment>
<comment type="function">
    <text evidence="1">Catalyzes the release of premature peptidyl moieties from peptidyl-tRNA molecules trapped in stalled 50S ribosomal subunits, and thus maintains levels of free tRNAs and 50S ribosomes.</text>
</comment>
<comment type="catalytic activity">
    <reaction evidence="1">
        <text>an N-acyl-L-alpha-aminoacyl-tRNA + H2O = an N-acyl-L-amino acid + a tRNA + H(+)</text>
        <dbReference type="Rhea" id="RHEA:54448"/>
        <dbReference type="Rhea" id="RHEA-COMP:10123"/>
        <dbReference type="Rhea" id="RHEA-COMP:13883"/>
        <dbReference type="ChEBI" id="CHEBI:15377"/>
        <dbReference type="ChEBI" id="CHEBI:15378"/>
        <dbReference type="ChEBI" id="CHEBI:59874"/>
        <dbReference type="ChEBI" id="CHEBI:78442"/>
        <dbReference type="ChEBI" id="CHEBI:138191"/>
        <dbReference type="EC" id="3.1.1.29"/>
    </reaction>
</comment>
<comment type="subunit">
    <text evidence="1">Monomer.</text>
</comment>
<comment type="subcellular location">
    <subcellularLocation>
        <location evidence="1">Cytoplasm</location>
    </subcellularLocation>
</comment>
<comment type="similarity">
    <text evidence="1">Belongs to the PTH family.</text>
</comment>
<evidence type="ECO:0000255" key="1">
    <source>
        <dbReference type="HAMAP-Rule" id="MF_00083"/>
    </source>
</evidence>
<accession>A8EY65</accession>
<reference key="1">
    <citation type="submission" date="2007-09" db="EMBL/GenBank/DDBJ databases">
        <title>Complete genome sequence of Rickettsia canadensis.</title>
        <authorList>
            <person name="Madan A."/>
            <person name="Fahey J."/>
            <person name="Helton E."/>
            <person name="Ketteman M."/>
            <person name="Madan A."/>
            <person name="Rodrigues S."/>
            <person name="Sanchez A."/>
            <person name="Whiting M."/>
            <person name="Dasch G."/>
            <person name="Eremeeva M."/>
        </authorList>
    </citation>
    <scope>NUCLEOTIDE SEQUENCE [LARGE SCALE GENOMIC DNA]</scope>
    <source>
        <strain>McKiel</strain>
    </source>
</reference>